<feature type="chain" id="PRO_0000264889" description="UvrABC system protein C">
    <location>
        <begin position="1"/>
        <end position="607"/>
    </location>
</feature>
<feature type="domain" description="GIY-YIG" evidence="1">
    <location>
        <begin position="29"/>
        <end position="106"/>
    </location>
</feature>
<feature type="domain" description="UVR" evidence="1">
    <location>
        <begin position="211"/>
        <end position="246"/>
    </location>
</feature>
<comment type="function">
    <text evidence="1">The UvrABC repair system catalyzes the recognition and processing of DNA lesions. UvrC both incises the 5' and 3' sides of the lesion. The N-terminal half is responsible for the 3' incision and the C-terminal half is responsible for the 5' incision.</text>
</comment>
<comment type="subunit">
    <text evidence="1">Interacts with UvrB in an incision complex.</text>
</comment>
<comment type="subcellular location">
    <subcellularLocation>
        <location evidence="1">Cytoplasm</location>
    </subcellularLocation>
</comment>
<comment type="similarity">
    <text evidence="1">Belongs to the UvrC family.</text>
</comment>
<name>UVRC_DESHY</name>
<accession>Q24WC0</accession>
<keyword id="KW-0963">Cytoplasm</keyword>
<keyword id="KW-0227">DNA damage</keyword>
<keyword id="KW-0228">DNA excision</keyword>
<keyword id="KW-0234">DNA repair</keyword>
<keyword id="KW-0267">Excision nuclease</keyword>
<keyword id="KW-1185">Reference proteome</keyword>
<keyword id="KW-0742">SOS response</keyword>
<sequence length="607" mass="68953">MHYRPSPTRIIPRCSNMEILREKLSLLPDKPGVYLMKDASGQIIYVGKAKVLKNRVRSYFTGSHNGKTQLMISLIADFETIITDSEVEALLLECNLIKKHNPKYNILLRDDKTYPFITITDEAHPRILVTRQVKKGAGKYYGPYPNATAAKEAARLLNRLFPFRKCRQIPNKPCLYYHLGQCLGPCQVDVPKEAYDKIRKEAAAFLKGDQGAILKALEKKMKEASENLEFERAKEYRDLMEDLKKVGEKQNITLNDFVDRDVVGYAYTQDQLCIQIFYLRQGKLLSRDNFIFPYYEEPEEAFVSFLAQFYTESSALPQEILLPPLDISVLTKLFPMVVPQKGQKRDLVQMAMENAQTTLHEQISIEIRNLTECTQALAEIGNALGIPSLRTIESFDISNIAGTHSVAGMIQFLDGKPNRSQYRKFKIQPMPNMDDTASMHQVIERRYARLQQENLPLPDLILVDGGKGQIHAALAALHSLNAAIPVAGMVKNDKHQTSALIDAMDRIHSLDRRSAGFRLLERIQNEVHRFAITFHRQQRAKSMTLSELDGIAGVGPKRRQQLLKFFKSIDSIRQATLEELQQSGLPAPAAAAVYQHFNSHKEENHDS</sequence>
<reference key="1">
    <citation type="journal article" date="2006" name="J. Bacteriol.">
        <title>Complete genome sequence of the dehalorespiring bacterium Desulfitobacterium hafniense Y51 and comparison with Dehalococcoides ethenogenes 195.</title>
        <authorList>
            <person name="Nonaka H."/>
            <person name="Keresztes G."/>
            <person name="Shinoda Y."/>
            <person name="Ikenaga Y."/>
            <person name="Abe M."/>
            <person name="Naito K."/>
            <person name="Inatomi K."/>
            <person name="Furukawa K."/>
            <person name="Inui M."/>
            <person name="Yukawa H."/>
        </authorList>
    </citation>
    <scope>NUCLEOTIDE SEQUENCE [LARGE SCALE GENOMIC DNA]</scope>
    <source>
        <strain>Y51</strain>
    </source>
</reference>
<protein>
    <recommendedName>
        <fullName evidence="1">UvrABC system protein C</fullName>
        <shortName evidence="1">Protein UvrC</shortName>
    </recommendedName>
    <alternativeName>
        <fullName evidence="1">Excinuclease ABC subunit C</fullName>
    </alternativeName>
</protein>
<evidence type="ECO:0000255" key="1">
    <source>
        <dbReference type="HAMAP-Rule" id="MF_00203"/>
    </source>
</evidence>
<dbReference type="EMBL" id="AP008230">
    <property type="protein sequence ID" value="BAE83672.1"/>
    <property type="molecule type" value="Genomic_DNA"/>
</dbReference>
<dbReference type="SMR" id="Q24WC0"/>
<dbReference type="STRING" id="138119.DSY1883"/>
<dbReference type="KEGG" id="dsy:DSY1883"/>
<dbReference type="eggNOG" id="COG0322">
    <property type="taxonomic scope" value="Bacteria"/>
</dbReference>
<dbReference type="HOGENOM" id="CLU_014841_3_2_9"/>
<dbReference type="Proteomes" id="UP000001946">
    <property type="component" value="Chromosome"/>
</dbReference>
<dbReference type="GO" id="GO:0005737">
    <property type="term" value="C:cytoplasm"/>
    <property type="evidence" value="ECO:0007669"/>
    <property type="project" value="UniProtKB-SubCell"/>
</dbReference>
<dbReference type="GO" id="GO:0009380">
    <property type="term" value="C:excinuclease repair complex"/>
    <property type="evidence" value="ECO:0007669"/>
    <property type="project" value="InterPro"/>
</dbReference>
<dbReference type="GO" id="GO:0003677">
    <property type="term" value="F:DNA binding"/>
    <property type="evidence" value="ECO:0007669"/>
    <property type="project" value="UniProtKB-UniRule"/>
</dbReference>
<dbReference type="GO" id="GO:0009381">
    <property type="term" value="F:excinuclease ABC activity"/>
    <property type="evidence" value="ECO:0007669"/>
    <property type="project" value="UniProtKB-UniRule"/>
</dbReference>
<dbReference type="GO" id="GO:0006289">
    <property type="term" value="P:nucleotide-excision repair"/>
    <property type="evidence" value="ECO:0007669"/>
    <property type="project" value="UniProtKB-UniRule"/>
</dbReference>
<dbReference type="GO" id="GO:0009432">
    <property type="term" value="P:SOS response"/>
    <property type="evidence" value="ECO:0007669"/>
    <property type="project" value="UniProtKB-UniRule"/>
</dbReference>
<dbReference type="CDD" id="cd10434">
    <property type="entry name" value="GIY-YIG_UvrC_Cho"/>
    <property type="match status" value="1"/>
</dbReference>
<dbReference type="FunFam" id="3.40.1440.10:FF:000001">
    <property type="entry name" value="UvrABC system protein C"/>
    <property type="match status" value="1"/>
</dbReference>
<dbReference type="Gene3D" id="1.10.150.20">
    <property type="entry name" value="5' to 3' exonuclease, C-terminal subdomain"/>
    <property type="match status" value="1"/>
</dbReference>
<dbReference type="Gene3D" id="3.40.1440.10">
    <property type="entry name" value="GIY-YIG endonuclease"/>
    <property type="match status" value="1"/>
</dbReference>
<dbReference type="Gene3D" id="4.10.860.10">
    <property type="entry name" value="UVR domain"/>
    <property type="match status" value="1"/>
</dbReference>
<dbReference type="Gene3D" id="3.30.420.340">
    <property type="entry name" value="UvrC, RNAse H endonuclease domain"/>
    <property type="match status" value="1"/>
</dbReference>
<dbReference type="HAMAP" id="MF_00203">
    <property type="entry name" value="UvrC"/>
    <property type="match status" value="1"/>
</dbReference>
<dbReference type="InterPro" id="IPR000305">
    <property type="entry name" value="GIY-YIG_endonuc"/>
</dbReference>
<dbReference type="InterPro" id="IPR035901">
    <property type="entry name" value="GIY-YIG_endonuc_sf"/>
</dbReference>
<dbReference type="InterPro" id="IPR047296">
    <property type="entry name" value="GIY-YIG_UvrC_Cho"/>
</dbReference>
<dbReference type="InterPro" id="IPR010994">
    <property type="entry name" value="RuvA_2-like"/>
</dbReference>
<dbReference type="InterPro" id="IPR001943">
    <property type="entry name" value="UVR_dom"/>
</dbReference>
<dbReference type="InterPro" id="IPR036876">
    <property type="entry name" value="UVR_dom_sf"/>
</dbReference>
<dbReference type="InterPro" id="IPR050066">
    <property type="entry name" value="UvrABC_protein_C"/>
</dbReference>
<dbReference type="InterPro" id="IPR004791">
    <property type="entry name" value="UvrC"/>
</dbReference>
<dbReference type="InterPro" id="IPR001162">
    <property type="entry name" value="UvrC_RNase_H_dom"/>
</dbReference>
<dbReference type="InterPro" id="IPR038476">
    <property type="entry name" value="UvrC_RNase_H_dom_sf"/>
</dbReference>
<dbReference type="NCBIfam" id="TIGR00194">
    <property type="entry name" value="uvrC"/>
    <property type="match status" value="1"/>
</dbReference>
<dbReference type="PANTHER" id="PTHR30562:SF1">
    <property type="entry name" value="UVRABC SYSTEM PROTEIN C"/>
    <property type="match status" value="1"/>
</dbReference>
<dbReference type="PANTHER" id="PTHR30562">
    <property type="entry name" value="UVRC/OXIDOREDUCTASE"/>
    <property type="match status" value="1"/>
</dbReference>
<dbReference type="Pfam" id="PF01541">
    <property type="entry name" value="GIY-YIG"/>
    <property type="match status" value="1"/>
</dbReference>
<dbReference type="Pfam" id="PF02151">
    <property type="entry name" value="UVR"/>
    <property type="match status" value="1"/>
</dbReference>
<dbReference type="Pfam" id="PF22920">
    <property type="entry name" value="UvrC_RNaseH"/>
    <property type="match status" value="1"/>
</dbReference>
<dbReference type="Pfam" id="PF08459">
    <property type="entry name" value="UvrC_RNaseH_dom"/>
    <property type="match status" value="1"/>
</dbReference>
<dbReference type="SMART" id="SM00465">
    <property type="entry name" value="GIYc"/>
    <property type="match status" value="1"/>
</dbReference>
<dbReference type="SUPFAM" id="SSF46600">
    <property type="entry name" value="C-terminal UvrC-binding domain of UvrB"/>
    <property type="match status" value="1"/>
</dbReference>
<dbReference type="SUPFAM" id="SSF82771">
    <property type="entry name" value="GIY-YIG endonuclease"/>
    <property type="match status" value="1"/>
</dbReference>
<dbReference type="SUPFAM" id="SSF47781">
    <property type="entry name" value="RuvA domain 2-like"/>
    <property type="match status" value="1"/>
</dbReference>
<dbReference type="PROSITE" id="PS50164">
    <property type="entry name" value="GIY_YIG"/>
    <property type="match status" value="1"/>
</dbReference>
<dbReference type="PROSITE" id="PS50151">
    <property type="entry name" value="UVR"/>
    <property type="match status" value="1"/>
</dbReference>
<dbReference type="PROSITE" id="PS50165">
    <property type="entry name" value="UVRC"/>
    <property type="match status" value="1"/>
</dbReference>
<proteinExistence type="inferred from homology"/>
<gene>
    <name evidence="1" type="primary">uvrC</name>
    <name type="ordered locus">DSY1883</name>
</gene>
<organism>
    <name type="scientific">Desulfitobacterium hafniense (strain Y51)</name>
    <dbReference type="NCBI Taxonomy" id="138119"/>
    <lineage>
        <taxon>Bacteria</taxon>
        <taxon>Bacillati</taxon>
        <taxon>Bacillota</taxon>
        <taxon>Clostridia</taxon>
        <taxon>Eubacteriales</taxon>
        <taxon>Desulfitobacteriaceae</taxon>
        <taxon>Desulfitobacterium</taxon>
    </lineage>
</organism>